<name>TPIS_PROMA</name>
<accession>Q7VC41</accession>
<sequence>MRKTVIAGNWKMHMTCSSAKEYIDKFIPFSKEFPSDRHVVIAPPFTAISTLASLLQGTNIQLSSQNVHWEDTGAFTAEISPSMLLEHDVRYAIVGHSEPRKYFSESDEQINLRARSAQSNGLIPIVCVGESIEQRERGEAERVIRRQVEQGLEQTDLTKLVIAYEPIWAIGTGKTCESNEANRICGLIREWAGFSDLIIQYGGSVKPANIDEIMSMSDIDGVLVGGASLDPENFARIANYQSI</sequence>
<protein>
    <recommendedName>
        <fullName evidence="1">Triosephosphate isomerase</fullName>
        <shortName evidence="1">TIM</shortName>
        <shortName evidence="1">TPI</shortName>
        <ecNumber evidence="1">5.3.1.1</ecNumber>
    </recommendedName>
    <alternativeName>
        <fullName evidence="1">Triose-phosphate isomerase</fullName>
    </alternativeName>
</protein>
<reference key="1">
    <citation type="journal article" date="2003" name="Proc. Natl. Acad. Sci. U.S.A.">
        <title>Genome sequence of the cyanobacterium Prochlorococcus marinus SS120, a nearly minimal oxyphototrophic genome.</title>
        <authorList>
            <person name="Dufresne A."/>
            <person name="Salanoubat M."/>
            <person name="Partensky F."/>
            <person name="Artiguenave F."/>
            <person name="Axmann I.M."/>
            <person name="Barbe V."/>
            <person name="Duprat S."/>
            <person name="Galperin M.Y."/>
            <person name="Koonin E.V."/>
            <person name="Le Gall F."/>
            <person name="Makarova K.S."/>
            <person name="Ostrowski M."/>
            <person name="Oztas S."/>
            <person name="Robert C."/>
            <person name="Rogozin I.B."/>
            <person name="Scanlan D.J."/>
            <person name="Tandeau de Marsac N."/>
            <person name="Weissenbach J."/>
            <person name="Wincker P."/>
            <person name="Wolf Y.I."/>
            <person name="Hess W.R."/>
        </authorList>
    </citation>
    <scope>NUCLEOTIDE SEQUENCE [LARGE SCALE GENOMIC DNA]</scope>
    <source>
        <strain>SARG / CCMP1375 / SS120</strain>
    </source>
</reference>
<organism>
    <name type="scientific">Prochlorococcus marinus (strain SARG / CCMP1375 / SS120)</name>
    <dbReference type="NCBI Taxonomy" id="167539"/>
    <lineage>
        <taxon>Bacteria</taxon>
        <taxon>Bacillati</taxon>
        <taxon>Cyanobacteriota</taxon>
        <taxon>Cyanophyceae</taxon>
        <taxon>Synechococcales</taxon>
        <taxon>Prochlorococcaceae</taxon>
        <taxon>Prochlorococcus</taxon>
    </lineage>
</organism>
<comment type="function">
    <text evidence="1">Involved in the gluconeogenesis. Catalyzes stereospecifically the conversion of dihydroxyacetone phosphate (DHAP) to D-glyceraldehyde-3-phosphate (G3P).</text>
</comment>
<comment type="catalytic activity">
    <reaction evidence="1">
        <text>D-glyceraldehyde 3-phosphate = dihydroxyacetone phosphate</text>
        <dbReference type="Rhea" id="RHEA:18585"/>
        <dbReference type="ChEBI" id="CHEBI:57642"/>
        <dbReference type="ChEBI" id="CHEBI:59776"/>
        <dbReference type="EC" id="5.3.1.1"/>
    </reaction>
</comment>
<comment type="pathway">
    <text evidence="1">Carbohydrate biosynthesis; gluconeogenesis.</text>
</comment>
<comment type="pathway">
    <text evidence="1">Carbohydrate degradation; glycolysis; D-glyceraldehyde 3-phosphate from glycerone phosphate: step 1/1.</text>
</comment>
<comment type="subunit">
    <text evidence="1">Homodimer.</text>
</comment>
<comment type="subcellular location">
    <subcellularLocation>
        <location evidence="1">Cytoplasm</location>
    </subcellularLocation>
</comment>
<comment type="similarity">
    <text evidence="1">Belongs to the triosephosphate isomerase family.</text>
</comment>
<evidence type="ECO:0000255" key="1">
    <source>
        <dbReference type="HAMAP-Rule" id="MF_00147"/>
    </source>
</evidence>
<proteinExistence type="inferred from homology"/>
<keyword id="KW-0963">Cytoplasm</keyword>
<keyword id="KW-0312">Gluconeogenesis</keyword>
<keyword id="KW-0324">Glycolysis</keyword>
<keyword id="KW-0413">Isomerase</keyword>
<keyword id="KW-1185">Reference proteome</keyword>
<dbReference type="EC" id="5.3.1.1" evidence="1"/>
<dbReference type="EMBL" id="AE017126">
    <property type="protein sequence ID" value="AAP99945.1"/>
    <property type="molecule type" value="Genomic_DNA"/>
</dbReference>
<dbReference type="RefSeq" id="NP_875293.1">
    <property type="nucleotide sequence ID" value="NC_005042.1"/>
</dbReference>
<dbReference type="RefSeq" id="WP_011125053.1">
    <property type="nucleotide sequence ID" value="NC_005042.1"/>
</dbReference>
<dbReference type="SMR" id="Q7VC41"/>
<dbReference type="STRING" id="167539.Pro_0901"/>
<dbReference type="EnsemblBacteria" id="AAP99945">
    <property type="protein sequence ID" value="AAP99945"/>
    <property type="gene ID" value="Pro_0901"/>
</dbReference>
<dbReference type="KEGG" id="pma:Pro_0901"/>
<dbReference type="PATRIC" id="fig|167539.5.peg.948"/>
<dbReference type="eggNOG" id="COG0149">
    <property type="taxonomic scope" value="Bacteria"/>
</dbReference>
<dbReference type="HOGENOM" id="CLU_024251_2_3_3"/>
<dbReference type="OrthoDB" id="9809429at2"/>
<dbReference type="UniPathway" id="UPA00109">
    <property type="reaction ID" value="UER00189"/>
</dbReference>
<dbReference type="UniPathway" id="UPA00138"/>
<dbReference type="Proteomes" id="UP000001420">
    <property type="component" value="Chromosome"/>
</dbReference>
<dbReference type="GO" id="GO:0005829">
    <property type="term" value="C:cytosol"/>
    <property type="evidence" value="ECO:0007669"/>
    <property type="project" value="TreeGrafter"/>
</dbReference>
<dbReference type="GO" id="GO:0004807">
    <property type="term" value="F:triose-phosphate isomerase activity"/>
    <property type="evidence" value="ECO:0007669"/>
    <property type="project" value="UniProtKB-UniRule"/>
</dbReference>
<dbReference type="GO" id="GO:0006094">
    <property type="term" value="P:gluconeogenesis"/>
    <property type="evidence" value="ECO:0007669"/>
    <property type="project" value="UniProtKB-UniRule"/>
</dbReference>
<dbReference type="GO" id="GO:0046166">
    <property type="term" value="P:glyceraldehyde-3-phosphate biosynthetic process"/>
    <property type="evidence" value="ECO:0007669"/>
    <property type="project" value="TreeGrafter"/>
</dbReference>
<dbReference type="GO" id="GO:0019563">
    <property type="term" value="P:glycerol catabolic process"/>
    <property type="evidence" value="ECO:0007669"/>
    <property type="project" value="TreeGrafter"/>
</dbReference>
<dbReference type="GO" id="GO:0006096">
    <property type="term" value="P:glycolytic process"/>
    <property type="evidence" value="ECO:0007669"/>
    <property type="project" value="UniProtKB-UniRule"/>
</dbReference>
<dbReference type="CDD" id="cd00311">
    <property type="entry name" value="TIM"/>
    <property type="match status" value="1"/>
</dbReference>
<dbReference type="FunFam" id="3.20.20.70:FF:000016">
    <property type="entry name" value="Triosephosphate isomerase"/>
    <property type="match status" value="1"/>
</dbReference>
<dbReference type="Gene3D" id="3.20.20.70">
    <property type="entry name" value="Aldolase class I"/>
    <property type="match status" value="1"/>
</dbReference>
<dbReference type="HAMAP" id="MF_00147_B">
    <property type="entry name" value="TIM_B"/>
    <property type="match status" value="1"/>
</dbReference>
<dbReference type="InterPro" id="IPR013785">
    <property type="entry name" value="Aldolase_TIM"/>
</dbReference>
<dbReference type="InterPro" id="IPR035990">
    <property type="entry name" value="TIM_sf"/>
</dbReference>
<dbReference type="InterPro" id="IPR022896">
    <property type="entry name" value="TrioseP_Isoase_bac/euk"/>
</dbReference>
<dbReference type="InterPro" id="IPR000652">
    <property type="entry name" value="Triosephosphate_isomerase"/>
</dbReference>
<dbReference type="InterPro" id="IPR020861">
    <property type="entry name" value="Triosephosphate_isomerase_AS"/>
</dbReference>
<dbReference type="NCBIfam" id="TIGR00419">
    <property type="entry name" value="tim"/>
    <property type="match status" value="1"/>
</dbReference>
<dbReference type="PANTHER" id="PTHR21139">
    <property type="entry name" value="TRIOSEPHOSPHATE ISOMERASE"/>
    <property type="match status" value="1"/>
</dbReference>
<dbReference type="PANTHER" id="PTHR21139:SF42">
    <property type="entry name" value="TRIOSEPHOSPHATE ISOMERASE"/>
    <property type="match status" value="1"/>
</dbReference>
<dbReference type="Pfam" id="PF00121">
    <property type="entry name" value="TIM"/>
    <property type="match status" value="1"/>
</dbReference>
<dbReference type="SUPFAM" id="SSF51351">
    <property type="entry name" value="Triosephosphate isomerase (TIM)"/>
    <property type="match status" value="1"/>
</dbReference>
<dbReference type="PROSITE" id="PS00171">
    <property type="entry name" value="TIM_1"/>
    <property type="match status" value="1"/>
</dbReference>
<dbReference type="PROSITE" id="PS51440">
    <property type="entry name" value="TIM_2"/>
    <property type="match status" value="1"/>
</dbReference>
<feature type="chain" id="PRO_0000090265" description="Triosephosphate isomerase">
    <location>
        <begin position="1"/>
        <end position="243"/>
    </location>
</feature>
<feature type="active site" description="Electrophile" evidence="1">
    <location>
        <position position="96"/>
    </location>
</feature>
<feature type="active site" description="Proton acceptor" evidence="1">
    <location>
        <position position="165"/>
    </location>
</feature>
<feature type="binding site" evidence="1">
    <location>
        <begin position="9"/>
        <end position="11"/>
    </location>
    <ligand>
        <name>substrate</name>
    </ligand>
</feature>
<feature type="binding site" evidence="1">
    <location>
        <position position="171"/>
    </location>
    <ligand>
        <name>substrate</name>
    </ligand>
</feature>
<feature type="binding site" evidence="1">
    <location>
        <position position="204"/>
    </location>
    <ligand>
        <name>substrate</name>
    </ligand>
</feature>
<feature type="binding site" evidence="1">
    <location>
        <begin position="225"/>
        <end position="226"/>
    </location>
    <ligand>
        <name>substrate</name>
    </ligand>
</feature>
<gene>
    <name evidence="1" type="primary">tpiA</name>
    <name type="synonym">tpi</name>
    <name type="ordered locus">Pro_0901</name>
</gene>